<proteinExistence type="inferred from homology"/>
<evidence type="ECO:0000255" key="1">
    <source>
        <dbReference type="HAMAP-Rule" id="MF_00360"/>
    </source>
</evidence>
<evidence type="ECO:0000305" key="2"/>
<keyword id="KW-0687">Ribonucleoprotein</keyword>
<keyword id="KW-0689">Ribosomal protein</keyword>
<keyword id="KW-0694">RNA-binding</keyword>
<keyword id="KW-0699">rRNA-binding</keyword>
<feature type="chain" id="PRO_1000005256" description="Small ribosomal subunit protein bS6">
    <location>
        <begin position="1"/>
        <end position="101"/>
    </location>
</feature>
<comment type="function">
    <text evidence="1">Binds together with bS18 to 16S ribosomal RNA.</text>
</comment>
<comment type="similarity">
    <text evidence="1">Belongs to the bacterial ribosomal protein bS6 family.</text>
</comment>
<reference key="1">
    <citation type="journal article" date="2009" name="Environ. Microbiol.">
        <title>Contribution of mobile genetic elements to Desulfovibrio vulgaris genome plasticity.</title>
        <authorList>
            <person name="Walker C.B."/>
            <person name="Stolyar S."/>
            <person name="Chivian D."/>
            <person name="Pinel N."/>
            <person name="Gabster J.A."/>
            <person name="Dehal P.S."/>
            <person name="He Z."/>
            <person name="Yang Z.K."/>
            <person name="Yen H.C."/>
            <person name="Zhou J."/>
            <person name="Wall J.D."/>
            <person name="Hazen T.C."/>
            <person name="Arkin A.P."/>
            <person name="Stahl D.A."/>
        </authorList>
    </citation>
    <scope>NUCLEOTIDE SEQUENCE [LARGE SCALE GENOMIC DNA]</scope>
    <source>
        <strain>DP4</strain>
    </source>
</reference>
<gene>
    <name evidence="1" type="primary">rpsF</name>
    <name type="ordered locus">Dvul_2030</name>
</gene>
<protein>
    <recommendedName>
        <fullName evidence="1">Small ribosomal subunit protein bS6</fullName>
    </recommendedName>
    <alternativeName>
        <fullName evidence="2">30S ribosomal protein S6</fullName>
    </alternativeName>
</protein>
<name>RS6_NITV4</name>
<organism>
    <name type="scientific">Nitratidesulfovibrio vulgaris (strain DP4)</name>
    <name type="common">Desulfovibrio vulgaris</name>
    <dbReference type="NCBI Taxonomy" id="391774"/>
    <lineage>
        <taxon>Bacteria</taxon>
        <taxon>Pseudomonadati</taxon>
        <taxon>Thermodesulfobacteriota</taxon>
        <taxon>Desulfovibrionia</taxon>
        <taxon>Desulfovibrionales</taxon>
        <taxon>Desulfovibrionaceae</taxon>
        <taxon>Nitratidesulfovibrio</taxon>
    </lineage>
</organism>
<sequence length="101" mass="11360">MRKFETLLLLSPELAADAREALLTTLSGVVEREQGSMITADHWGMRDLAYPVRKQMRGYYVRLEYTAPGATVAELERIIRISDGIFKFVTVKLADAVEEVA</sequence>
<accession>A1VF30</accession>
<dbReference type="EMBL" id="CP000527">
    <property type="protein sequence ID" value="ABM29046.1"/>
    <property type="molecule type" value="Genomic_DNA"/>
</dbReference>
<dbReference type="RefSeq" id="WP_010938255.1">
    <property type="nucleotide sequence ID" value="NC_008751.1"/>
</dbReference>
<dbReference type="SMR" id="A1VF30"/>
<dbReference type="KEGG" id="dvl:Dvul_2030"/>
<dbReference type="HOGENOM" id="CLU_113441_5_1_7"/>
<dbReference type="Proteomes" id="UP000009173">
    <property type="component" value="Chromosome"/>
</dbReference>
<dbReference type="GO" id="GO:0005737">
    <property type="term" value="C:cytoplasm"/>
    <property type="evidence" value="ECO:0007669"/>
    <property type="project" value="UniProtKB-ARBA"/>
</dbReference>
<dbReference type="GO" id="GO:1990904">
    <property type="term" value="C:ribonucleoprotein complex"/>
    <property type="evidence" value="ECO:0007669"/>
    <property type="project" value="UniProtKB-KW"/>
</dbReference>
<dbReference type="GO" id="GO:0005840">
    <property type="term" value="C:ribosome"/>
    <property type="evidence" value="ECO:0007669"/>
    <property type="project" value="UniProtKB-KW"/>
</dbReference>
<dbReference type="GO" id="GO:0070181">
    <property type="term" value="F:small ribosomal subunit rRNA binding"/>
    <property type="evidence" value="ECO:0007669"/>
    <property type="project" value="TreeGrafter"/>
</dbReference>
<dbReference type="GO" id="GO:0003735">
    <property type="term" value="F:structural constituent of ribosome"/>
    <property type="evidence" value="ECO:0007669"/>
    <property type="project" value="InterPro"/>
</dbReference>
<dbReference type="GO" id="GO:0006412">
    <property type="term" value="P:translation"/>
    <property type="evidence" value="ECO:0007669"/>
    <property type="project" value="UniProtKB-UniRule"/>
</dbReference>
<dbReference type="CDD" id="cd00473">
    <property type="entry name" value="bS6"/>
    <property type="match status" value="1"/>
</dbReference>
<dbReference type="Gene3D" id="3.30.70.60">
    <property type="match status" value="1"/>
</dbReference>
<dbReference type="HAMAP" id="MF_00360">
    <property type="entry name" value="Ribosomal_bS6"/>
    <property type="match status" value="1"/>
</dbReference>
<dbReference type="InterPro" id="IPR000529">
    <property type="entry name" value="Ribosomal_bS6"/>
</dbReference>
<dbReference type="InterPro" id="IPR035980">
    <property type="entry name" value="Ribosomal_bS6_sf"/>
</dbReference>
<dbReference type="InterPro" id="IPR020814">
    <property type="entry name" value="Ribosomal_S6_plastid/chlpt"/>
</dbReference>
<dbReference type="InterPro" id="IPR014717">
    <property type="entry name" value="Transl_elong_EF1B/ribsomal_bS6"/>
</dbReference>
<dbReference type="NCBIfam" id="TIGR00166">
    <property type="entry name" value="S6"/>
    <property type="match status" value="1"/>
</dbReference>
<dbReference type="PANTHER" id="PTHR21011">
    <property type="entry name" value="MITOCHONDRIAL 28S RIBOSOMAL PROTEIN S6"/>
    <property type="match status" value="1"/>
</dbReference>
<dbReference type="PANTHER" id="PTHR21011:SF1">
    <property type="entry name" value="SMALL RIBOSOMAL SUBUNIT PROTEIN BS6M"/>
    <property type="match status" value="1"/>
</dbReference>
<dbReference type="Pfam" id="PF01250">
    <property type="entry name" value="Ribosomal_S6"/>
    <property type="match status" value="1"/>
</dbReference>
<dbReference type="SUPFAM" id="SSF54995">
    <property type="entry name" value="Ribosomal protein S6"/>
    <property type="match status" value="1"/>
</dbReference>